<protein>
    <recommendedName>
        <fullName>Cytochrome b</fullName>
    </recommendedName>
    <alternativeName>
        <fullName>Complex III subunit 3</fullName>
    </alternativeName>
    <alternativeName>
        <fullName>Complex III subunit III</fullName>
    </alternativeName>
    <alternativeName>
        <fullName>Cytochrome b-c1 complex subunit 3</fullName>
    </alternativeName>
    <alternativeName>
        <fullName>Ubiquinol-cytochrome-c reductase complex cytochrome b subunit</fullName>
    </alternativeName>
</protein>
<organism>
    <name type="scientific">Crotalus atrox</name>
    <name type="common">Western diamondback rattlesnake</name>
    <dbReference type="NCBI Taxonomy" id="8730"/>
    <lineage>
        <taxon>Eukaryota</taxon>
        <taxon>Metazoa</taxon>
        <taxon>Chordata</taxon>
        <taxon>Craniata</taxon>
        <taxon>Vertebrata</taxon>
        <taxon>Euteleostomi</taxon>
        <taxon>Lepidosauria</taxon>
        <taxon>Squamata</taxon>
        <taxon>Bifurcata</taxon>
        <taxon>Unidentata</taxon>
        <taxon>Episquamata</taxon>
        <taxon>Toxicofera</taxon>
        <taxon>Serpentes</taxon>
        <taxon>Colubroidea</taxon>
        <taxon>Viperidae</taxon>
        <taxon>Crotalinae</taxon>
        <taxon>Crotalus</taxon>
    </lineage>
</organism>
<feature type="chain" id="PRO_0000060824" description="Cytochrome b">
    <location>
        <begin position="1" status="less than"/>
        <end position="214" status="greater than"/>
    </location>
</feature>
<feature type="transmembrane region" description="Helical" evidence="3">
    <location>
        <begin position="31"/>
        <end position="51"/>
    </location>
</feature>
<feature type="transmembrane region" description="Helical" evidence="2">
    <location>
        <begin position="75"/>
        <end position="96"/>
    </location>
</feature>
<feature type="transmembrane region" description="Helical" evidence="2">
    <location>
        <begin position="111"/>
        <end position="131"/>
    </location>
</feature>
<feature type="transmembrane region" description="Helical" evidence="3">
    <location>
        <begin position="176"/>
        <end position="196"/>
    </location>
</feature>
<feature type="binding site" description="axial binding residue" evidence="2">
    <location>
        <position position="81"/>
    </location>
    <ligand>
        <name>heme b</name>
        <dbReference type="ChEBI" id="CHEBI:60344"/>
        <label>b562</label>
    </ligand>
    <ligandPart>
        <name>Fe</name>
        <dbReference type="ChEBI" id="CHEBI:18248"/>
    </ligandPart>
</feature>
<feature type="binding site" description="axial binding residue" evidence="2">
    <location>
        <position position="95"/>
    </location>
    <ligand>
        <name>heme b</name>
        <dbReference type="ChEBI" id="CHEBI:60344"/>
        <label>b566</label>
    </ligand>
    <ligandPart>
        <name>Fe</name>
        <dbReference type="ChEBI" id="CHEBI:18248"/>
    </ligandPart>
</feature>
<feature type="binding site" description="axial binding residue" evidence="2">
    <location>
        <position position="180"/>
    </location>
    <ligand>
        <name>heme b</name>
        <dbReference type="ChEBI" id="CHEBI:60344"/>
        <label>b562</label>
    </ligand>
    <ligandPart>
        <name>Fe</name>
        <dbReference type="ChEBI" id="CHEBI:18248"/>
    </ligandPart>
</feature>
<feature type="binding site" description="axial binding residue" evidence="2">
    <location>
        <position position="194"/>
    </location>
    <ligand>
        <name>heme b</name>
        <dbReference type="ChEBI" id="CHEBI:60344"/>
        <label>b566</label>
    </ligand>
    <ligandPart>
        <name>Fe</name>
        <dbReference type="ChEBI" id="CHEBI:18248"/>
    </ligandPart>
</feature>
<feature type="binding site" evidence="2">
    <location>
        <position position="199"/>
    </location>
    <ligand>
        <name>a ubiquinone</name>
        <dbReference type="ChEBI" id="CHEBI:16389"/>
    </ligand>
</feature>
<feature type="non-terminal residue">
    <location>
        <position position="1"/>
    </location>
</feature>
<feature type="non-terminal residue">
    <location>
        <position position="214"/>
    </location>
</feature>
<proteinExistence type="inferred from homology"/>
<name>CYB_CROAT</name>
<gene>
    <name type="primary">MT-CYB</name>
    <name type="synonym">COB</name>
    <name type="synonym">CYTB</name>
    <name type="synonym">MTCYB</name>
</gene>
<keyword id="KW-0249">Electron transport</keyword>
<keyword id="KW-0349">Heme</keyword>
<keyword id="KW-0408">Iron</keyword>
<keyword id="KW-0472">Membrane</keyword>
<keyword id="KW-0479">Metal-binding</keyword>
<keyword id="KW-0496">Mitochondrion</keyword>
<keyword id="KW-0999">Mitochondrion inner membrane</keyword>
<keyword id="KW-0679">Respiratory chain</keyword>
<keyword id="KW-0812">Transmembrane</keyword>
<keyword id="KW-1133">Transmembrane helix</keyword>
<keyword id="KW-0813">Transport</keyword>
<keyword id="KW-0830">Ubiquinone</keyword>
<dbReference type="EMBL" id="AF039264">
    <property type="protein sequence ID" value="AAC33541.1"/>
    <property type="molecule type" value="Genomic_DNA"/>
</dbReference>
<dbReference type="SMR" id="P92850"/>
<dbReference type="GO" id="GO:0005743">
    <property type="term" value="C:mitochondrial inner membrane"/>
    <property type="evidence" value="ECO:0007669"/>
    <property type="project" value="UniProtKB-SubCell"/>
</dbReference>
<dbReference type="GO" id="GO:0046872">
    <property type="term" value="F:metal ion binding"/>
    <property type="evidence" value="ECO:0007669"/>
    <property type="project" value="UniProtKB-KW"/>
</dbReference>
<dbReference type="GO" id="GO:0008121">
    <property type="term" value="F:ubiquinol-cytochrome-c reductase activity"/>
    <property type="evidence" value="ECO:0007669"/>
    <property type="project" value="TreeGrafter"/>
</dbReference>
<dbReference type="GO" id="GO:0006122">
    <property type="term" value="P:mitochondrial electron transport, ubiquinol to cytochrome c"/>
    <property type="evidence" value="ECO:0007669"/>
    <property type="project" value="TreeGrafter"/>
</dbReference>
<dbReference type="CDD" id="cd00284">
    <property type="entry name" value="Cytochrome_b_N"/>
    <property type="match status" value="1"/>
</dbReference>
<dbReference type="Gene3D" id="1.20.810.10">
    <property type="entry name" value="Cytochrome Bc1 Complex, Chain C"/>
    <property type="match status" value="1"/>
</dbReference>
<dbReference type="InterPro" id="IPR005797">
    <property type="entry name" value="Cyt_b/b6_N"/>
</dbReference>
<dbReference type="InterPro" id="IPR027387">
    <property type="entry name" value="Cytb/b6-like_sf"/>
</dbReference>
<dbReference type="InterPro" id="IPR048259">
    <property type="entry name" value="Cytochrome_b_N_euk/bac"/>
</dbReference>
<dbReference type="InterPro" id="IPR016174">
    <property type="entry name" value="Di-haem_cyt_TM"/>
</dbReference>
<dbReference type="PANTHER" id="PTHR19271">
    <property type="entry name" value="CYTOCHROME B"/>
    <property type="match status" value="1"/>
</dbReference>
<dbReference type="PANTHER" id="PTHR19271:SF16">
    <property type="entry name" value="CYTOCHROME B"/>
    <property type="match status" value="1"/>
</dbReference>
<dbReference type="Pfam" id="PF00033">
    <property type="entry name" value="Cytochrome_B"/>
    <property type="match status" value="1"/>
</dbReference>
<dbReference type="SUPFAM" id="SSF81342">
    <property type="entry name" value="Transmembrane di-heme cytochromes"/>
    <property type="match status" value="1"/>
</dbReference>
<dbReference type="PROSITE" id="PS51002">
    <property type="entry name" value="CYTB_NTER"/>
    <property type="match status" value="1"/>
</dbReference>
<evidence type="ECO:0000250" key="1"/>
<evidence type="ECO:0000250" key="2">
    <source>
        <dbReference type="UniProtKB" id="P00157"/>
    </source>
</evidence>
<evidence type="ECO:0000255" key="3">
    <source>
        <dbReference type="PROSITE-ProRule" id="PRU00968"/>
    </source>
</evidence>
<geneLocation type="mitochondrion"/>
<accession>P92850</accession>
<sequence>YINYKNMSHQHLLTLFNLLPVGANISTWWNFGSMLLSCLMIQIATGFFLAIHYTANINMAFSSIVHISRDVPYGWIMQNTHAIGASLFFICIYIHIARGIYYGSYLNKEVWLSGTTLLIILMATAFFGYVLPWGQMSFWAATVITNLLTAIPYLGTTLTTWLWGGFAINDPTLTRFFALHFILPFAIISLSSLHILLLHNEGSNNPLGTNSDID</sequence>
<comment type="function">
    <text evidence="2">Component of the ubiquinol-cytochrome c reductase complex (complex III or cytochrome b-c1 complex) that is part of the mitochondrial respiratory chain. The b-c1 complex mediates electron transfer from ubiquinol to cytochrome c. Contributes to the generation of a proton gradient across the mitochondrial membrane that is then used for ATP synthesis.</text>
</comment>
<comment type="cofactor">
    <cofactor evidence="2">
        <name>heme b</name>
        <dbReference type="ChEBI" id="CHEBI:60344"/>
    </cofactor>
    <text evidence="2">Binds 2 heme b groups non-covalently.</text>
</comment>
<comment type="subunit">
    <text evidence="2">The cytochrome bc1 complex contains 3 respiratory subunits (MT-CYB, CYC1 and UQCRFS1), 2 core proteins (UQCRC1 and UQCRC2) and probably 6 low-molecular weight proteins.</text>
</comment>
<comment type="subcellular location">
    <subcellularLocation>
        <location evidence="2">Mitochondrion inner membrane</location>
        <topology evidence="2">Multi-pass membrane protein</topology>
    </subcellularLocation>
</comment>
<comment type="miscellaneous">
    <text evidence="1">Heme 1 (or BL or b562) is low-potential and absorbs at about 562 nm, and heme 2 (or BH or b566) is high-potential and absorbs at about 566 nm.</text>
</comment>
<comment type="similarity">
    <text evidence="3">Belongs to the cytochrome b family.</text>
</comment>
<comment type="caution">
    <text evidence="2">The full-length protein contains only eight transmembrane helices, not nine as predicted by bioinformatics tools.</text>
</comment>
<reference key="1">
    <citation type="journal article" date="1998" name="Mol. Phylogenet. Evol.">
        <title>Weighting and congruence: a case study based on three mitochondrial genes in pitvipers.</title>
        <authorList>
            <person name="Vidal N."/>
            <person name="Lecointre G."/>
        </authorList>
    </citation>
    <scope>NUCLEOTIDE SEQUENCE [GENOMIC DNA]</scope>
</reference>
<reference key="2">
    <citation type="journal article" date="1997" name="C. R. Acad. Sci. III, Sci. Vie">
        <title>Molecular systematics of pitvipers: paraphyly of the Bothrops complex.</title>
        <authorList>
            <person name="Vidal N."/>
            <person name="Lecointre G."/>
            <person name="Vie J.-C."/>
            <person name="Gasc J.-P."/>
        </authorList>
    </citation>
    <scope>NUCLEOTIDE SEQUENCE [GENOMIC DNA] OF 1-132</scope>
</reference>